<name>MUTS_BUCAP</name>
<dbReference type="EMBL" id="AE013218">
    <property type="protein sequence ID" value="AAM67959.1"/>
    <property type="molecule type" value="Genomic_DNA"/>
</dbReference>
<dbReference type="RefSeq" id="WP_011053926.1">
    <property type="nucleotide sequence ID" value="NC_004061.1"/>
</dbReference>
<dbReference type="SMR" id="Q8K9D2"/>
<dbReference type="STRING" id="198804.BUsg_414"/>
<dbReference type="GeneID" id="93003886"/>
<dbReference type="KEGG" id="bas:BUsg_414"/>
<dbReference type="eggNOG" id="COG0249">
    <property type="taxonomic scope" value="Bacteria"/>
</dbReference>
<dbReference type="HOGENOM" id="CLU_002472_4_0_6"/>
<dbReference type="Proteomes" id="UP000000416">
    <property type="component" value="Chromosome"/>
</dbReference>
<dbReference type="GO" id="GO:0005829">
    <property type="term" value="C:cytosol"/>
    <property type="evidence" value="ECO:0007669"/>
    <property type="project" value="TreeGrafter"/>
</dbReference>
<dbReference type="GO" id="GO:0005524">
    <property type="term" value="F:ATP binding"/>
    <property type="evidence" value="ECO:0007669"/>
    <property type="project" value="UniProtKB-UniRule"/>
</dbReference>
<dbReference type="GO" id="GO:0140664">
    <property type="term" value="F:ATP-dependent DNA damage sensor activity"/>
    <property type="evidence" value="ECO:0007669"/>
    <property type="project" value="InterPro"/>
</dbReference>
<dbReference type="GO" id="GO:0003684">
    <property type="term" value="F:damaged DNA binding"/>
    <property type="evidence" value="ECO:0007669"/>
    <property type="project" value="UniProtKB-UniRule"/>
</dbReference>
<dbReference type="GO" id="GO:0030983">
    <property type="term" value="F:mismatched DNA binding"/>
    <property type="evidence" value="ECO:0007669"/>
    <property type="project" value="InterPro"/>
</dbReference>
<dbReference type="GO" id="GO:0006298">
    <property type="term" value="P:mismatch repair"/>
    <property type="evidence" value="ECO:0007669"/>
    <property type="project" value="UniProtKB-UniRule"/>
</dbReference>
<dbReference type="FunFam" id="3.40.1170.10:FF:000001">
    <property type="entry name" value="DNA mismatch repair protein MutS"/>
    <property type="match status" value="1"/>
</dbReference>
<dbReference type="FunFam" id="3.40.50.300:FF:000870">
    <property type="entry name" value="MutS protein homolog 4"/>
    <property type="match status" value="1"/>
</dbReference>
<dbReference type="Gene3D" id="1.10.1420.10">
    <property type="match status" value="2"/>
</dbReference>
<dbReference type="Gene3D" id="3.40.1170.10">
    <property type="entry name" value="DNA repair protein MutS, domain I"/>
    <property type="match status" value="1"/>
</dbReference>
<dbReference type="Gene3D" id="3.30.420.110">
    <property type="entry name" value="MutS, connector domain"/>
    <property type="match status" value="1"/>
</dbReference>
<dbReference type="Gene3D" id="3.40.50.300">
    <property type="entry name" value="P-loop containing nucleotide triphosphate hydrolases"/>
    <property type="match status" value="1"/>
</dbReference>
<dbReference type="HAMAP" id="MF_00096">
    <property type="entry name" value="MutS"/>
    <property type="match status" value="1"/>
</dbReference>
<dbReference type="InterPro" id="IPR005748">
    <property type="entry name" value="DNA_mismatch_repair_MutS"/>
</dbReference>
<dbReference type="InterPro" id="IPR007695">
    <property type="entry name" value="DNA_mismatch_repair_MutS-lik_N"/>
</dbReference>
<dbReference type="InterPro" id="IPR017261">
    <property type="entry name" value="DNA_mismatch_repair_MutS/MSH"/>
</dbReference>
<dbReference type="InterPro" id="IPR000432">
    <property type="entry name" value="DNA_mismatch_repair_MutS_C"/>
</dbReference>
<dbReference type="InterPro" id="IPR007861">
    <property type="entry name" value="DNA_mismatch_repair_MutS_clamp"/>
</dbReference>
<dbReference type="InterPro" id="IPR007696">
    <property type="entry name" value="DNA_mismatch_repair_MutS_core"/>
</dbReference>
<dbReference type="InterPro" id="IPR016151">
    <property type="entry name" value="DNA_mismatch_repair_MutS_N"/>
</dbReference>
<dbReference type="InterPro" id="IPR036187">
    <property type="entry name" value="DNA_mismatch_repair_MutS_sf"/>
</dbReference>
<dbReference type="InterPro" id="IPR007860">
    <property type="entry name" value="DNA_mmatch_repair_MutS_con_dom"/>
</dbReference>
<dbReference type="InterPro" id="IPR045076">
    <property type="entry name" value="MutS"/>
</dbReference>
<dbReference type="InterPro" id="IPR036678">
    <property type="entry name" value="MutS_con_dom_sf"/>
</dbReference>
<dbReference type="InterPro" id="IPR027417">
    <property type="entry name" value="P-loop_NTPase"/>
</dbReference>
<dbReference type="NCBIfam" id="TIGR01070">
    <property type="entry name" value="mutS1"/>
    <property type="match status" value="1"/>
</dbReference>
<dbReference type="NCBIfam" id="NF003810">
    <property type="entry name" value="PRK05399.1"/>
    <property type="match status" value="1"/>
</dbReference>
<dbReference type="PANTHER" id="PTHR11361:SF34">
    <property type="entry name" value="DNA MISMATCH REPAIR PROTEIN MSH1, MITOCHONDRIAL"/>
    <property type="match status" value="1"/>
</dbReference>
<dbReference type="PANTHER" id="PTHR11361">
    <property type="entry name" value="DNA MISMATCH REPAIR PROTEIN MUTS FAMILY MEMBER"/>
    <property type="match status" value="1"/>
</dbReference>
<dbReference type="Pfam" id="PF01624">
    <property type="entry name" value="MutS_I"/>
    <property type="match status" value="1"/>
</dbReference>
<dbReference type="Pfam" id="PF05188">
    <property type="entry name" value="MutS_II"/>
    <property type="match status" value="1"/>
</dbReference>
<dbReference type="Pfam" id="PF05192">
    <property type="entry name" value="MutS_III"/>
    <property type="match status" value="1"/>
</dbReference>
<dbReference type="Pfam" id="PF05190">
    <property type="entry name" value="MutS_IV"/>
    <property type="match status" value="1"/>
</dbReference>
<dbReference type="Pfam" id="PF00488">
    <property type="entry name" value="MutS_V"/>
    <property type="match status" value="1"/>
</dbReference>
<dbReference type="PIRSF" id="PIRSF037677">
    <property type="entry name" value="DNA_mis_repair_Msh6"/>
    <property type="match status" value="1"/>
</dbReference>
<dbReference type="SMART" id="SM00534">
    <property type="entry name" value="MUTSac"/>
    <property type="match status" value="1"/>
</dbReference>
<dbReference type="SMART" id="SM00533">
    <property type="entry name" value="MUTSd"/>
    <property type="match status" value="1"/>
</dbReference>
<dbReference type="SUPFAM" id="SSF55271">
    <property type="entry name" value="DNA repair protein MutS, domain I"/>
    <property type="match status" value="1"/>
</dbReference>
<dbReference type="SUPFAM" id="SSF53150">
    <property type="entry name" value="DNA repair protein MutS, domain II"/>
    <property type="match status" value="1"/>
</dbReference>
<dbReference type="SUPFAM" id="SSF48334">
    <property type="entry name" value="DNA repair protein MutS, domain III"/>
    <property type="match status" value="1"/>
</dbReference>
<dbReference type="SUPFAM" id="SSF52540">
    <property type="entry name" value="P-loop containing nucleoside triphosphate hydrolases"/>
    <property type="match status" value="1"/>
</dbReference>
<dbReference type="PROSITE" id="PS00486">
    <property type="entry name" value="DNA_MISMATCH_REPAIR_2"/>
    <property type="match status" value="1"/>
</dbReference>
<reference key="1">
    <citation type="journal article" date="2002" name="Science">
        <title>50 million years of genomic stasis in endosymbiotic bacteria.</title>
        <authorList>
            <person name="Tamas I."/>
            <person name="Klasson L."/>
            <person name="Canbaeck B."/>
            <person name="Naeslund A.K."/>
            <person name="Eriksson A.-S."/>
            <person name="Wernegreen J.J."/>
            <person name="Sandstroem J.P."/>
            <person name="Moran N.A."/>
            <person name="Andersson S.G.E."/>
        </authorList>
    </citation>
    <scope>NUCLEOTIDE SEQUENCE [LARGE SCALE GENOMIC DNA]</scope>
    <source>
        <strain>Sg</strain>
    </source>
</reference>
<gene>
    <name type="primary">mutS</name>
    <name type="ordered locus">BUsg_414</name>
</gene>
<proteinExistence type="inferred from homology"/>
<organism>
    <name type="scientific">Buchnera aphidicola subsp. Schizaphis graminum (strain Sg)</name>
    <dbReference type="NCBI Taxonomy" id="198804"/>
    <lineage>
        <taxon>Bacteria</taxon>
        <taxon>Pseudomonadati</taxon>
        <taxon>Pseudomonadota</taxon>
        <taxon>Gammaproteobacteria</taxon>
        <taxon>Enterobacterales</taxon>
        <taxon>Erwiniaceae</taxon>
        <taxon>Buchnera</taxon>
    </lineage>
</organism>
<keyword id="KW-0067">ATP-binding</keyword>
<keyword id="KW-0227">DNA damage</keyword>
<keyword id="KW-0234">DNA repair</keyword>
<keyword id="KW-0238">DNA-binding</keyword>
<keyword id="KW-0547">Nucleotide-binding</keyword>
<protein>
    <recommendedName>
        <fullName>DNA mismatch repair protein MutS</fullName>
    </recommendedName>
</protein>
<feature type="chain" id="PRO_0000115080" description="DNA mismatch repair protein MutS">
    <location>
        <begin position="1"/>
        <end position="805"/>
    </location>
</feature>
<feature type="binding site" evidence="2">
    <location>
        <begin position="617"/>
        <end position="624"/>
    </location>
    <ligand>
        <name>ATP</name>
        <dbReference type="ChEBI" id="CHEBI:30616"/>
    </ligand>
</feature>
<accession>Q8K9D2</accession>
<evidence type="ECO:0000250" key="1"/>
<evidence type="ECO:0000255" key="2"/>
<evidence type="ECO:0000305" key="3"/>
<comment type="function">
    <text evidence="1">This protein is involved in the repair of mismatches in DNA. It is possible that it carries out the mismatch recognition step. This protein has a weak ATPase activity (By similarity).</text>
</comment>
<comment type="similarity">
    <text evidence="3">Belongs to the DNA mismatch repair MutS family.</text>
</comment>
<sequence length="805" mass="92255">MTETNFSTKNSNHTPMIKQYLSLKSQYPNMLLFYQMGDFYELFYEDAKRVSRLLKITLTKKGNSNNNIIPMAGVPCHTAEYYLSKLVKMGESIAVCDQIKDVYSEKKLLTRQVVRVITPGTITDEAFLEENKDNFIAAVWKENNKFAYAILDISLGFFGVSEHFDRNSLLSEIERTNPTELLYPENFEDMLLISHKKCIQKRPLLDFDIKISYKLLTLQFKTSNLNGFGIKKNHFVIRPAGCLINYIKLMHISFLPHIRKIQFNYIENNIFMNSSTRKSLEIIESISGESKNTLSSVLNKTVTSMGGRLLNRWLNTPSKDLSLIKNRHGMVKLLRPFYKEIQCILRQVSDLERICSRLALRTALPRDFVRMRSTLNILPDLCLILKKIKSTSINNVLMSIGKFEKILFLLKKSINLTVPSSIRDGGVIACNYNKKLDELRSLKKNSQKYLQDFEVKEKSRLNIDSFKIGYNNIVGYYIQVNKRHSHLIPHSYLKIQTLKNVERYSVPLLKNYEKQVISAKFQAIFLEKTLYMELFDIIEPFLEDLKNSAFALSELDVLVNLSERSISLNYVCPKMTKKYGITLVESRHPVVECFLENPFISNSVDLSKKNRMLIITGPNMGGKSTYMRQVALIIIMACIGSFVPAKYASIGLIDKIFTRIGSADDVSNGYSTFMMEMTEISNILHNATCNSLILIDELGRGTSNKDGLALAWSCSKYLMTKNKSMILLSTHFIELTKLENFFKNIKNFYFSAFEHDSNIAFLYKIKKGISKKSYGIAVASLSGIPDIVIQDAKKKLIELESDNVF</sequence>